<dbReference type="EMBL" id="AP009373">
    <property type="protein sequence ID" value="BAF50410.1"/>
    <property type="molecule type" value="Genomic_DNA"/>
</dbReference>
<dbReference type="RefSeq" id="YP_001123586.1">
    <property type="nucleotide sequence ID" value="NC_009272.1"/>
</dbReference>
<dbReference type="SMR" id="A4QL55"/>
<dbReference type="GeneID" id="4964686"/>
<dbReference type="GO" id="GO:0009507">
    <property type="term" value="C:chloroplast"/>
    <property type="evidence" value="ECO:0007669"/>
    <property type="project" value="UniProtKB-SubCell"/>
</dbReference>
<dbReference type="GO" id="GO:0022625">
    <property type="term" value="C:cytosolic large ribosomal subunit"/>
    <property type="evidence" value="ECO:0007669"/>
    <property type="project" value="TreeGrafter"/>
</dbReference>
<dbReference type="GO" id="GO:0070180">
    <property type="term" value="F:large ribosomal subunit rRNA binding"/>
    <property type="evidence" value="ECO:0007669"/>
    <property type="project" value="TreeGrafter"/>
</dbReference>
<dbReference type="GO" id="GO:0003735">
    <property type="term" value="F:structural constituent of ribosome"/>
    <property type="evidence" value="ECO:0007669"/>
    <property type="project" value="InterPro"/>
</dbReference>
<dbReference type="GO" id="GO:0006412">
    <property type="term" value="P:translation"/>
    <property type="evidence" value="ECO:0007669"/>
    <property type="project" value="UniProtKB-UniRule"/>
</dbReference>
<dbReference type="CDD" id="cd00337">
    <property type="entry name" value="Ribosomal_uL14"/>
    <property type="match status" value="1"/>
</dbReference>
<dbReference type="FunFam" id="2.40.150.20:FF:000002">
    <property type="entry name" value="50S ribosomal protein L14, chloroplastic"/>
    <property type="match status" value="1"/>
</dbReference>
<dbReference type="Gene3D" id="2.40.150.20">
    <property type="entry name" value="Ribosomal protein L14"/>
    <property type="match status" value="1"/>
</dbReference>
<dbReference type="HAMAP" id="MF_01367">
    <property type="entry name" value="Ribosomal_uL14"/>
    <property type="match status" value="1"/>
</dbReference>
<dbReference type="InterPro" id="IPR000218">
    <property type="entry name" value="Ribosomal_uL14"/>
</dbReference>
<dbReference type="InterPro" id="IPR005745">
    <property type="entry name" value="Ribosomal_uL14_bac-type"/>
</dbReference>
<dbReference type="InterPro" id="IPR019972">
    <property type="entry name" value="Ribosomal_uL14_CS"/>
</dbReference>
<dbReference type="InterPro" id="IPR036853">
    <property type="entry name" value="Ribosomal_uL14_sf"/>
</dbReference>
<dbReference type="NCBIfam" id="TIGR01067">
    <property type="entry name" value="rplN_bact"/>
    <property type="match status" value="1"/>
</dbReference>
<dbReference type="PANTHER" id="PTHR11761">
    <property type="entry name" value="50S/60S RIBOSOMAL PROTEIN L14/L23"/>
    <property type="match status" value="1"/>
</dbReference>
<dbReference type="PANTHER" id="PTHR11761:SF3">
    <property type="entry name" value="LARGE RIBOSOMAL SUBUNIT PROTEIN UL14M"/>
    <property type="match status" value="1"/>
</dbReference>
<dbReference type="Pfam" id="PF00238">
    <property type="entry name" value="Ribosomal_L14"/>
    <property type="match status" value="1"/>
</dbReference>
<dbReference type="SMART" id="SM01374">
    <property type="entry name" value="Ribosomal_L14"/>
    <property type="match status" value="1"/>
</dbReference>
<dbReference type="SUPFAM" id="SSF50193">
    <property type="entry name" value="Ribosomal protein L14"/>
    <property type="match status" value="1"/>
</dbReference>
<dbReference type="PROSITE" id="PS00049">
    <property type="entry name" value="RIBOSOMAL_L14"/>
    <property type="match status" value="1"/>
</dbReference>
<sequence length="122" mass="13568">MIQPQTYLNVADNSGARELMCIRIIGASNRRYAHIGDVIVAVIKEAIPNSPLERSEVIRAVIVRTCKELKRNNGTIIRYDDNAAVVIDQEGNPKGTRVFGAIPRELRQLNFTKIVSLAPEVL</sequence>
<name>RK14_DRANE</name>
<reference key="1">
    <citation type="submission" date="2007-03" db="EMBL/GenBank/DDBJ databases">
        <title>Sequencing analysis of Draba nemoroza chloroplast DNA.</title>
        <authorList>
            <person name="Hosouchi T."/>
            <person name="Tsuruoka H."/>
            <person name="Kotani H."/>
        </authorList>
    </citation>
    <scope>NUCLEOTIDE SEQUENCE [LARGE SCALE GENOMIC DNA]</scope>
</reference>
<organism>
    <name type="scientific">Draba nemorosa</name>
    <name type="common">Woodland whitlowgrass</name>
    <dbReference type="NCBI Taxonomy" id="171822"/>
    <lineage>
        <taxon>Eukaryota</taxon>
        <taxon>Viridiplantae</taxon>
        <taxon>Streptophyta</taxon>
        <taxon>Embryophyta</taxon>
        <taxon>Tracheophyta</taxon>
        <taxon>Spermatophyta</taxon>
        <taxon>Magnoliopsida</taxon>
        <taxon>eudicotyledons</taxon>
        <taxon>Gunneridae</taxon>
        <taxon>Pentapetalae</taxon>
        <taxon>rosids</taxon>
        <taxon>malvids</taxon>
        <taxon>Brassicales</taxon>
        <taxon>Brassicaceae</taxon>
        <taxon>Arabideae</taxon>
        <taxon>Draba</taxon>
    </lineage>
</organism>
<gene>
    <name evidence="1" type="primary">rpl14</name>
</gene>
<accession>A4QL55</accession>
<comment type="function">
    <text evidence="1">Binds to 23S rRNA.</text>
</comment>
<comment type="subunit">
    <text evidence="1">Part of the 50S ribosomal subunit.</text>
</comment>
<comment type="subcellular location">
    <subcellularLocation>
        <location>Plastid</location>
        <location>Chloroplast</location>
    </subcellularLocation>
</comment>
<comment type="similarity">
    <text evidence="1">Belongs to the universal ribosomal protein uL14 family.</text>
</comment>
<proteinExistence type="inferred from homology"/>
<protein>
    <recommendedName>
        <fullName evidence="1">Large ribosomal subunit protein uL14c</fullName>
    </recommendedName>
    <alternativeName>
        <fullName evidence="2">50S ribosomal protein L14, chloroplastic</fullName>
    </alternativeName>
</protein>
<evidence type="ECO:0000255" key="1">
    <source>
        <dbReference type="HAMAP-Rule" id="MF_01367"/>
    </source>
</evidence>
<evidence type="ECO:0000305" key="2"/>
<geneLocation type="chloroplast"/>
<keyword id="KW-0150">Chloroplast</keyword>
<keyword id="KW-0934">Plastid</keyword>
<keyword id="KW-0687">Ribonucleoprotein</keyword>
<keyword id="KW-0689">Ribosomal protein</keyword>
<keyword id="KW-0694">RNA-binding</keyword>
<keyword id="KW-0699">rRNA-binding</keyword>
<feature type="chain" id="PRO_0000355878" description="Large ribosomal subunit protein uL14c">
    <location>
        <begin position="1"/>
        <end position="122"/>
    </location>
</feature>